<keyword id="KW-0963">Cytoplasm</keyword>
<keyword id="KW-0238">DNA-binding</keyword>
<keyword id="KW-1185">Reference proteome</keyword>
<gene>
    <name type="ordered locus">Ping_2276</name>
</gene>
<organism>
    <name type="scientific">Psychromonas ingrahamii (strain DSM 17664 / CCUG 51855 / 37)</name>
    <dbReference type="NCBI Taxonomy" id="357804"/>
    <lineage>
        <taxon>Bacteria</taxon>
        <taxon>Pseudomonadati</taxon>
        <taxon>Pseudomonadota</taxon>
        <taxon>Gammaproteobacteria</taxon>
        <taxon>Alteromonadales</taxon>
        <taxon>Psychromonadaceae</taxon>
        <taxon>Psychromonas</taxon>
    </lineage>
</organism>
<feature type="chain" id="PRO_1000003804" description="Nucleoid-associated protein Ping_2276">
    <location>
        <begin position="1"/>
        <end position="109"/>
    </location>
</feature>
<accession>A1SX02</accession>
<evidence type="ECO:0000255" key="1">
    <source>
        <dbReference type="HAMAP-Rule" id="MF_00274"/>
    </source>
</evidence>
<sequence>MFSKEGMGDLMKKAQEMQENMKKAQAEIANTEVTGESGAGLVKITILGNHNVRKVEIDPSLMEDDKEMLEDLIAAAMNDAVHRIGEVNKNKMSGVSGGMELPPGFKMPF</sequence>
<comment type="function">
    <text evidence="1">Binds to DNA and alters its conformation. May be involved in regulation of gene expression, nucleoid organization and DNA protection.</text>
</comment>
<comment type="subunit">
    <text evidence="1">Homodimer.</text>
</comment>
<comment type="subcellular location">
    <subcellularLocation>
        <location evidence="1">Cytoplasm</location>
        <location evidence="1">Nucleoid</location>
    </subcellularLocation>
</comment>
<comment type="similarity">
    <text evidence="1">Belongs to the YbaB/EbfC family.</text>
</comment>
<protein>
    <recommendedName>
        <fullName evidence="1">Nucleoid-associated protein Ping_2276</fullName>
    </recommendedName>
</protein>
<proteinExistence type="inferred from homology"/>
<reference key="1">
    <citation type="journal article" date="2008" name="BMC Genomics">
        <title>Genomics of an extreme psychrophile, Psychromonas ingrahamii.</title>
        <authorList>
            <person name="Riley M."/>
            <person name="Staley J.T."/>
            <person name="Danchin A."/>
            <person name="Wang T.Z."/>
            <person name="Brettin T.S."/>
            <person name="Hauser L.J."/>
            <person name="Land M.L."/>
            <person name="Thompson L.S."/>
        </authorList>
    </citation>
    <scope>NUCLEOTIDE SEQUENCE [LARGE SCALE GENOMIC DNA]</scope>
    <source>
        <strain>DSM 17664 / CCUG 51855 / 37</strain>
    </source>
</reference>
<dbReference type="EMBL" id="CP000510">
    <property type="protein sequence ID" value="ABM04017.1"/>
    <property type="molecule type" value="Genomic_DNA"/>
</dbReference>
<dbReference type="RefSeq" id="WP_011770577.1">
    <property type="nucleotide sequence ID" value="NC_008709.1"/>
</dbReference>
<dbReference type="SMR" id="A1SX02"/>
<dbReference type="STRING" id="357804.Ping_2276"/>
<dbReference type="KEGG" id="pin:Ping_2276"/>
<dbReference type="eggNOG" id="COG0718">
    <property type="taxonomic scope" value="Bacteria"/>
</dbReference>
<dbReference type="HOGENOM" id="CLU_140930_0_0_6"/>
<dbReference type="OrthoDB" id="9808738at2"/>
<dbReference type="Proteomes" id="UP000000639">
    <property type="component" value="Chromosome"/>
</dbReference>
<dbReference type="GO" id="GO:0043590">
    <property type="term" value="C:bacterial nucleoid"/>
    <property type="evidence" value="ECO:0007669"/>
    <property type="project" value="UniProtKB-UniRule"/>
</dbReference>
<dbReference type="GO" id="GO:0005829">
    <property type="term" value="C:cytosol"/>
    <property type="evidence" value="ECO:0007669"/>
    <property type="project" value="TreeGrafter"/>
</dbReference>
<dbReference type="GO" id="GO:0003677">
    <property type="term" value="F:DNA binding"/>
    <property type="evidence" value="ECO:0007669"/>
    <property type="project" value="UniProtKB-UniRule"/>
</dbReference>
<dbReference type="FunFam" id="3.30.1310.10:FF:000001">
    <property type="entry name" value="Nucleoid-associated protein YbaB"/>
    <property type="match status" value="1"/>
</dbReference>
<dbReference type="Gene3D" id="3.30.1310.10">
    <property type="entry name" value="Nucleoid-associated protein YbaB-like domain"/>
    <property type="match status" value="1"/>
</dbReference>
<dbReference type="HAMAP" id="MF_00274">
    <property type="entry name" value="DNA_YbaB_EbfC"/>
    <property type="match status" value="1"/>
</dbReference>
<dbReference type="InterPro" id="IPR036894">
    <property type="entry name" value="YbaB-like_sf"/>
</dbReference>
<dbReference type="InterPro" id="IPR004401">
    <property type="entry name" value="YbaB/EbfC"/>
</dbReference>
<dbReference type="NCBIfam" id="TIGR00103">
    <property type="entry name" value="DNA_YbaB_EbfC"/>
    <property type="match status" value="1"/>
</dbReference>
<dbReference type="PANTHER" id="PTHR33449">
    <property type="entry name" value="NUCLEOID-ASSOCIATED PROTEIN YBAB"/>
    <property type="match status" value="1"/>
</dbReference>
<dbReference type="PANTHER" id="PTHR33449:SF1">
    <property type="entry name" value="NUCLEOID-ASSOCIATED PROTEIN YBAB"/>
    <property type="match status" value="1"/>
</dbReference>
<dbReference type="Pfam" id="PF02575">
    <property type="entry name" value="YbaB_DNA_bd"/>
    <property type="match status" value="1"/>
</dbReference>
<dbReference type="PIRSF" id="PIRSF004555">
    <property type="entry name" value="UCP004555"/>
    <property type="match status" value="1"/>
</dbReference>
<dbReference type="SUPFAM" id="SSF82607">
    <property type="entry name" value="YbaB-like"/>
    <property type="match status" value="1"/>
</dbReference>
<name>Y2276_PSYIN</name>